<organism>
    <name type="scientific">Xenopus laevis</name>
    <name type="common">African clawed frog</name>
    <dbReference type="NCBI Taxonomy" id="8355"/>
    <lineage>
        <taxon>Eukaryota</taxon>
        <taxon>Metazoa</taxon>
        <taxon>Chordata</taxon>
        <taxon>Craniata</taxon>
        <taxon>Vertebrata</taxon>
        <taxon>Euteleostomi</taxon>
        <taxon>Amphibia</taxon>
        <taxon>Batrachia</taxon>
        <taxon>Anura</taxon>
        <taxon>Pipoidea</taxon>
        <taxon>Pipidae</taxon>
        <taxon>Xenopodinae</taxon>
        <taxon>Xenopus</taxon>
        <taxon>Xenopus</taxon>
    </lineage>
</organism>
<comment type="function">
    <text evidence="4">Transcription factor that acts synergistically with tal1/scl and lmo2 to specify embryonic dorsal mesoderm to a hematopoietic fate.</text>
</comment>
<comment type="subcellular location">
    <subcellularLocation>
        <location evidence="1">Nucleus</location>
    </subcellularLocation>
</comment>
<comment type="tissue specificity">
    <text evidence="5">Expressed in the developing ventral blood island, and in both tadpole and adult erythrocytes.</text>
</comment>
<comment type="developmental stage">
    <text evidence="5">Expressed zygotically by embryonic stage 11 (mid-gastrula).</text>
</comment>
<name>GAT1B_XENLA</name>
<accession>P23768</accession>
<protein>
    <recommendedName>
        <fullName>GATA-binding factor 1-B</fullName>
    </recommendedName>
    <alternativeName>
        <fullName>Transcription factor xGATA-1B</fullName>
    </alternativeName>
</protein>
<evidence type="ECO:0000250" key="1">
    <source>
        <dbReference type="UniProtKB" id="P15976"/>
    </source>
</evidence>
<evidence type="ECO:0000255" key="2">
    <source>
        <dbReference type="PROSITE-ProRule" id="PRU00094"/>
    </source>
</evidence>
<evidence type="ECO:0000256" key="3">
    <source>
        <dbReference type="SAM" id="MobiDB-lite"/>
    </source>
</evidence>
<evidence type="ECO:0000269" key="4">
    <source>
    </source>
</evidence>
<evidence type="ECO:0000269" key="5">
    <source>
    </source>
</evidence>
<gene>
    <name type="primary">gata1-b</name>
    <name type="synonym">gata1b</name>
</gene>
<feature type="chain" id="PRO_0000083402" description="GATA-binding factor 1-B">
    <location>
        <begin position="1"/>
        <end position="364"/>
    </location>
</feature>
<feature type="zinc finger region" description="GATA-type 1" evidence="2">
    <location>
        <begin position="180"/>
        <end position="204"/>
    </location>
</feature>
<feature type="zinc finger region" description="GATA-type 2" evidence="2">
    <location>
        <begin position="234"/>
        <end position="258"/>
    </location>
</feature>
<feature type="region of interest" description="Disordered" evidence="3">
    <location>
        <begin position="273"/>
        <end position="318"/>
    </location>
</feature>
<feature type="compositionally biased region" description="Basic residues" evidence="3">
    <location>
        <begin position="281"/>
        <end position="293"/>
    </location>
</feature>
<dbReference type="EMBL" id="M76563">
    <property type="protein sequence ID" value="AAA49722.1"/>
    <property type="molecule type" value="mRNA"/>
</dbReference>
<dbReference type="PIR" id="B41602">
    <property type="entry name" value="B41602"/>
</dbReference>
<dbReference type="RefSeq" id="NP_001079244.1">
    <property type="nucleotide sequence ID" value="NM_001085775.1"/>
</dbReference>
<dbReference type="SMR" id="P23768"/>
<dbReference type="GeneID" id="378511"/>
<dbReference type="KEGG" id="xla:378511"/>
<dbReference type="AGR" id="Xenbase:XB-GENE-6252666"/>
<dbReference type="CTD" id="378511"/>
<dbReference type="Xenbase" id="XB-GENE-6252666">
    <property type="gene designation" value="gata1.S"/>
</dbReference>
<dbReference type="OrthoDB" id="515401at2759"/>
<dbReference type="Proteomes" id="UP000186698">
    <property type="component" value="Chromosome 8S"/>
</dbReference>
<dbReference type="Bgee" id="378511">
    <property type="expression patterns" value="Expressed in lung and 14 other cell types or tissues"/>
</dbReference>
<dbReference type="GO" id="GO:0005634">
    <property type="term" value="C:nucleus"/>
    <property type="evidence" value="ECO:0000318"/>
    <property type="project" value="GO_Central"/>
</dbReference>
<dbReference type="GO" id="GO:0000981">
    <property type="term" value="F:DNA-binding transcription factor activity, RNA polymerase II-specific"/>
    <property type="evidence" value="ECO:0000318"/>
    <property type="project" value="GO_Central"/>
</dbReference>
<dbReference type="GO" id="GO:0000978">
    <property type="term" value="F:RNA polymerase II cis-regulatory region sequence-specific DNA binding"/>
    <property type="evidence" value="ECO:0000318"/>
    <property type="project" value="GO_Central"/>
</dbReference>
<dbReference type="GO" id="GO:0008270">
    <property type="term" value="F:zinc ion binding"/>
    <property type="evidence" value="ECO:0007669"/>
    <property type="project" value="UniProtKB-KW"/>
</dbReference>
<dbReference type="GO" id="GO:0045165">
    <property type="term" value="P:cell fate commitment"/>
    <property type="evidence" value="ECO:0000318"/>
    <property type="project" value="GO_Central"/>
</dbReference>
<dbReference type="GO" id="GO:0000122">
    <property type="term" value="P:negative regulation of transcription by RNA polymerase II"/>
    <property type="evidence" value="ECO:0000318"/>
    <property type="project" value="GO_Central"/>
</dbReference>
<dbReference type="GO" id="GO:0045944">
    <property type="term" value="P:positive regulation of transcription by RNA polymerase II"/>
    <property type="evidence" value="ECO:0000318"/>
    <property type="project" value="GO_Central"/>
</dbReference>
<dbReference type="CDD" id="cd00202">
    <property type="entry name" value="ZnF_GATA"/>
    <property type="match status" value="2"/>
</dbReference>
<dbReference type="FunFam" id="3.30.50.10:FF:000001">
    <property type="entry name" value="GATA transcription factor (GATAd)"/>
    <property type="match status" value="1"/>
</dbReference>
<dbReference type="FunFam" id="3.30.50.10:FF:000032">
    <property type="entry name" value="Transcription factor GATA-3"/>
    <property type="match status" value="1"/>
</dbReference>
<dbReference type="Gene3D" id="3.30.50.10">
    <property type="entry name" value="Erythroid Transcription Factor GATA-1, subunit A"/>
    <property type="match status" value="2"/>
</dbReference>
<dbReference type="InterPro" id="IPR039355">
    <property type="entry name" value="Transcription_factor_GATA"/>
</dbReference>
<dbReference type="InterPro" id="IPR000679">
    <property type="entry name" value="Znf_GATA"/>
</dbReference>
<dbReference type="InterPro" id="IPR013088">
    <property type="entry name" value="Znf_NHR/GATA"/>
</dbReference>
<dbReference type="PANTHER" id="PTHR10071:SF190">
    <property type="entry name" value="ERYTHROID TRANSCRIPTION FACTOR"/>
    <property type="match status" value="1"/>
</dbReference>
<dbReference type="PANTHER" id="PTHR10071">
    <property type="entry name" value="TRANSCRIPTION FACTOR GATA FAMILY MEMBER"/>
    <property type="match status" value="1"/>
</dbReference>
<dbReference type="Pfam" id="PF00320">
    <property type="entry name" value="GATA"/>
    <property type="match status" value="2"/>
</dbReference>
<dbReference type="PRINTS" id="PR00619">
    <property type="entry name" value="GATAZNFINGER"/>
</dbReference>
<dbReference type="SMART" id="SM00401">
    <property type="entry name" value="ZnF_GATA"/>
    <property type="match status" value="2"/>
</dbReference>
<dbReference type="SUPFAM" id="SSF57716">
    <property type="entry name" value="Glucocorticoid receptor-like (DNA-binding domain)"/>
    <property type="match status" value="2"/>
</dbReference>
<dbReference type="PROSITE" id="PS00344">
    <property type="entry name" value="GATA_ZN_FINGER_1"/>
    <property type="match status" value="2"/>
</dbReference>
<dbReference type="PROSITE" id="PS50114">
    <property type="entry name" value="GATA_ZN_FINGER_2"/>
    <property type="match status" value="2"/>
</dbReference>
<proteinExistence type="evidence at transcript level"/>
<reference key="1">
    <citation type="journal article" date="1991" name="Proc. Natl. Acad. Sci. U.S.A.">
        <title>Expression of GATA-binding proteins during embryonic development in Xenopus laevis.</title>
        <authorList>
            <person name="Zon L.I."/>
            <person name="Mather C."/>
            <person name="Burgess S."/>
            <person name="Bolce M.E."/>
            <person name="Harland R.M."/>
            <person name="Orkin S.H."/>
        </authorList>
    </citation>
    <scope>NUCLEOTIDE SEQUENCE [MRNA]</scope>
    <scope>TISSUE SPECIFICITY</scope>
    <scope>DEVELOPMENTAL STAGE</scope>
    <source>
        <tissue>Erythrocyte</tissue>
    </source>
</reference>
<reference key="2">
    <citation type="journal article" date="2001" name="Development">
        <title>Primitive erythropoiesis in the Xenopus embryo: the synergistic role of LMO-2, SCL and GATA-binding proteins.</title>
        <authorList>
            <person name="Mead P.E."/>
            <person name="Deconinck A.E."/>
            <person name="Huber T.L."/>
            <person name="Orkin S.H."/>
            <person name="Zon L.I."/>
        </authorList>
    </citation>
    <scope>FUNCTION</scope>
</reference>
<keyword id="KW-0010">Activator</keyword>
<keyword id="KW-0238">DNA-binding</keyword>
<keyword id="KW-0479">Metal-binding</keyword>
<keyword id="KW-0539">Nucleus</keyword>
<keyword id="KW-1185">Reference proteome</keyword>
<keyword id="KW-0677">Repeat</keyword>
<keyword id="KW-0804">Transcription</keyword>
<keyword id="KW-0805">Transcription regulation</keyword>
<keyword id="KW-0862">Zinc</keyword>
<keyword id="KW-0863">Zinc-finger</keyword>
<sequence length="364" mass="39769">MDYTTLTTQDPLQNYTESALASTSEDSEFLYGLGGENSPGHYGGIVSSRAVGGFRHSPVLQTFPLHWPETSAGIPQSLTTYGRSPGTLPLYPSAASALGSITSPPLYSATPFLLGSAPLAERDGSPKFLETLKTERTSPLTSDILSLEPRSPSLLQVGYLGGGGQEFSHSLFQSTEDRECVNCGATVTPLWRRDLSGHYLCNACGLYHKMNGQNRPLIRPKKRLIISKRAGTQCSNCHTSTTTLWRRNAGGDPVCNACGLYYKLHNVNRPLTMKKEGIQTRNRKVSSKSKKKKQLENPFEPPKTGVEEPSPYQYGPLLFHGQMPTMGHMLSPPHHFLQSPRMSHSTPAVSYRYSASGVTPPELA</sequence>